<reference key="1">
    <citation type="journal article" date="2002" name="Cryptogam. Bryol.">
        <title>The systematic position of the Hypoptergiaceae (Bryopsida) inferred from rps4 gene sequences.</title>
        <authorList>
            <person name="Bloecher R."/>
            <person name="Capesius I."/>
        </authorList>
    </citation>
    <scope>NUCLEOTIDE SEQUENCE [GENOMIC DNA]</scope>
</reference>
<dbReference type="EMBL" id="AJ252288">
    <property type="protein sequence ID" value="CAC81022.1"/>
    <property type="molecule type" value="Genomic_DNA"/>
</dbReference>
<dbReference type="SMR" id="P59148"/>
<dbReference type="GO" id="GO:0009507">
    <property type="term" value="C:chloroplast"/>
    <property type="evidence" value="ECO:0007669"/>
    <property type="project" value="UniProtKB-SubCell"/>
</dbReference>
<dbReference type="GO" id="GO:0015935">
    <property type="term" value="C:small ribosomal subunit"/>
    <property type="evidence" value="ECO:0007669"/>
    <property type="project" value="InterPro"/>
</dbReference>
<dbReference type="GO" id="GO:0019843">
    <property type="term" value="F:rRNA binding"/>
    <property type="evidence" value="ECO:0007669"/>
    <property type="project" value="UniProtKB-UniRule"/>
</dbReference>
<dbReference type="GO" id="GO:0003735">
    <property type="term" value="F:structural constituent of ribosome"/>
    <property type="evidence" value="ECO:0007669"/>
    <property type="project" value="InterPro"/>
</dbReference>
<dbReference type="GO" id="GO:0042274">
    <property type="term" value="P:ribosomal small subunit biogenesis"/>
    <property type="evidence" value="ECO:0007669"/>
    <property type="project" value="TreeGrafter"/>
</dbReference>
<dbReference type="GO" id="GO:0006412">
    <property type="term" value="P:translation"/>
    <property type="evidence" value="ECO:0007669"/>
    <property type="project" value="UniProtKB-UniRule"/>
</dbReference>
<dbReference type="CDD" id="cd00165">
    <property type="entry name" value="S4"/>
    <property type="match status" value="1"/>
</dbReference>
<dbReference type="FunFam" id="1.10.1050.10:FF:000002">
    <property type="entry name" value="30S ribosomal protein S4, chloroplastic"/>
    <property type="match status" value="1"/>
</dbReference>
<dbReference type="FunFam" id="3.10.290.10:FF:000081">
    <property type="entry name" value="30S ribosomal protein S4, chloroplastic"/>
    <property type="match status" value="1"/>
</dbReference>
<dbReference type="Gene3D" id="1.10.1050.10">
    <property type="entry name" value="Ribosomal Protein S4 Delta 41, Chain A, domain 1"/>
    <property type="match status" value="1"/>
</dbReference>
<dbReference type="Gene3D" id="3.10.290.10">
    <property type="entry name" value="RNA-binding S4 domain"/>
    <property type="match status" value="1"/>
</dbReference>
<dbReference type="HAMAP" id="MF_01306_B">
    <property type="entry name" value="Ribosomal_uS4_B"/>
    <property type="match status" value="1"/>
</dbReference>
<dbReference type="InterPro" id="IPR022801">
    <property type="entry name" value="Ribosomal_uS4"/>
</dbReference>
<dbReference type="InterPro" id="IPR005709">
    <property type="entry name" value="Ribosomal_uS4_bac-type"/>
</dbReference>
<dbReference type="InterPro" id="IPR018079">
    <property type="entry name" value="Ribosomal_uS4_CS"/>
</dbReference>
<dbReference type="InterPro" id="IPR001912">
    <property type="entry name" value="Ribosomal_uS4_N"/>
</dbReference>
<dbReference type="InterPro" id="IPR002942">
    <property type="entry name" value="S4_RNA-bd"/>
</dbReference>
<dbReference type="InterPro" id="IPR036986">
    <property type="entry name" value="S4_RNA-bd_sf"/>
</dbReference>
<dbReference type="NCBIfam" id="NF003717">
    <property type="entry name" value="PRK05327.1"/>
    <property type="match status" value="1"/>
</dbReference>
<dbReference type="NCBIfam" id="TIGR01017">
    <property type="entry name" value="rpsD_bact"/>
    <property type="match status" value="1"/>
</dbReference>
<dbReference type="PANTHER" id="PTHR11831">
    <property type="entry name" value="30S 40S RIBOSOMAL PROTEIN"/>
    <property type="match status" value="1"/>
</dbReference>
<dbReference type="PANTHER" id="PTHR11831:SF4">
    <property type="entry name" value="SMALL RIBOSOMAL SUBUNIT PROTEIN US4M"/>
    <property type="match status" value="1"/>
</dbReference>
<dbReference type="Pfam" id="PF00163">
    <property type="entry name" value="Ribosomal_S4"/>
    <property type="match status" value="1"/>
</dbReference>
<dbReference type="Pfam" id="PF01479">
    <property type="entry name" value="S4"/>
    <property type="match status" value="1"/>
</dbReference>
<dbReference type="SMART" id="SM01390">
    <property type="entry name" value="Ribosomal_S4"/>
    <property type="match status" value="1"/>
</dbReference>
<dbReference type="SMART" id="SM00363">
    <property type="entry name" value="S4"/>
    <property type="match status" value="1"/>
</dbReference>
<dbReference type="SUPFAM" id="SSF55174">
    <property type="entry name" value="Alpha-L RNA-binding motif"/>
    <property type="match status" value="1"/>
</dbReference>
<dbReference type="PROSITE" id="PS00632">
    <property type="entry name" value="RIBOSOMAL_S4"/>
    <property type="match status" value="1"/>
</dbReference>
<dbReference type="PROSITE" id="PS50889">
    <property type="entry name" value="S4"/>
    <property type="match status" value="1"/>
</dbReference>
<comment type="function">
    <text evidence="1">One of the primary rRNA binding proteins, it binds directly to 16S rRNA where it nucleates assembly of the body of the 30S subunit.</text>
</comment>
<comment type="function">
    <text evidence="1">With S5 and S12 plays an important role in translational accuracy.</text>
</comment>
<comment type="subunit">
    <text evidence="1">Part of the 30S ribosomal subunit. Contacts protein S5. The interaction surface between S4 and S5 is involved in control of translational fidelity (By similarity).</text>
</comment>
<comment type="subcellular location">
    <subcellularLocation>
        <location>Plastid</location>
        <location>Chloroplast</location>
    </subcellularLocation>
</comment>
<comment type="similarity">
    <text evidence="2">Belongs to the universal ribosomal protein uS4 family.</text>
</comment>
<feature type="chain" id="PRO_0000132621" description="Small ribosomal subunit protein uS4c">
    <location>
        <begin position="1"/>
        <end position="203"/>
    </location>
</feature>
<feature type="domain" description="S4 RNA-binding">
    <location>
        <begin position="91"/>
        <end position="154"/>
    </location>
</feature>
<sequence length="203" mass="23608">MSRYRGPRVRIIRRLGTLPGLTNKSAPQLKPSSINQSTSNKKISQYRIRLEEKQKLRFHYGITERQLLNYVRIARKAKGSTGEILLQLLEMRLDNIIFRLGMTPTIPGARQLVNHRHILVNGYIVDIPSYRCKPQDFITIKNKQKYESIISKNIELYQKSKIANHLTYSSLEKKGLVNQILDRESIGLKINELLVVEYYSRQA</sequence>
<protein>
    <recommendedName>
        <fullName evidence="2">Small ribosomal subunit protein uS4c</fullName>
    </recommendedName>
    <alternativeName>
        <fullName>30S ribosomal protein S4, chloroplastic</fullName>
    </alternativeName>
</protein>
<name>RR4_LOPST</name>
<keyword id="KW-0150">Chloroplast</keyword>
<keyword id="KW-0934">Plastid</keyword>
<keyword id="KW-0687">Ribonucleoprotein</keyword>
<keyword id="KW-0689">Ribosomal protein</keyword>
<keyword id="KW-0694">RNA-binding</keyword>
<keyword id="KW-0699">rRNA-binding</keyword>
<organism>
    <name type="scientific">Lopidium struthiopteris</name>
    <name type="common">Moss</name>
    <dbReference type="NCBI Taxonomy" id="69531"/>
    <lineage>
        <taxon>Eukaryota</taxon>
        <taxon>Viridiplantae</taxon>
        <taxon>Streptophyta</taxon>
        <taxon>Embryophyta</taxon>
        <taxon>Bryophyta</taxon>
        <taxon>Bryophytina</taxon>
        <taxon>Bryopsida</taxon>
        <taxon>Bryidae</taxon>
        <taxon>Hypnanae</taxon>
        <taxon>Hookeriales</taxon>
        <taxon>Hypopterygiaceae</taxon>
        <taxon>Lopidium</taxon>
    </lineage>
</organism>
<gene>
    <name type="primary">rps4</name>
</gene>
<proteinExistence type="inferred from homology"/>
<accession>P59148</accession>
<geneLocation type="chloroplast"/>
<evidence type="ECO:0000250" key="1"/>
<evidence type="ECO:0000305" key="2"/>